<keyword id="KW-0046">Antibiotic resistance</keyword>
<keyword id="KW-0196">Cycloheximide resistance</keyword>
<keyword id="KW-0687">Ribonucleoprotein</keyword>
<keyword id="KW-0689">Ribosomal protein</keyword>
<evidence type="ECO:0000250" key="1"/>
<evidence type="ECO:0000305" key="2"/>
<dbReference type="EMBL" id="D67040">
    <property type="protein sequence ID" value="BAA11057.1"/>
    <property type="molecule type" value="Genomic_DNA"/>
</dbReference>
<dbReference type="SMR" id="P52809"/>
<dbReference type="OMA" id="CKKHTIH"/>
<dbReference type="GO" id="GO:1990904">
    <property type="term" value="C:ribonucleoprotein complex"/>
    <property type="evidence" value="ECO:0007669"/>
    <property type="project" value="UniProtKB-KW"/>
</dbReference>
<dbReference type="GO" id="GO:0005840">
    <property type="term" value="C:ribosome"/>
    <property type="evidence" value="ECO:0007669"/>
    <property type="project" value="UniProtKB-KW"/>
</dbReference>
<dbReference type="GO" id="GO:0003735">
    <property type="term" value="F:structural constituent of ribosome"/>
    <property type="evidence" value="ECO:0007669"/>
    <property type="project" value="InterPro"/>
</dbReference>
<dbReference type="GO" id="GO:0046677">
    <property type="term" value="P:response to antibiotic"/>
    <property type="evidence" value="ECO:0007669"/>
    <property type="project" value="UniProtKB-KW"/>
</dbReference>
<dbReference type="GO" id="GO:0046898">
    <property type="term" value="P:response to cycloheximide"/>
    <property type="evidence" value="ECO:0007669"/>
    <property type="project" value="UniProtKB-KW"/>
</dbReference>
<dbReference type="GO" id="GO:0006412">
    <property type="term" value="P:translation"/>
    <property type="evidence" value="ECO:0007669"/>
    <property type="project" value="InterPro"/>
</dbReference>
<dbReference type="FunFam" id="3.10.450.80:FF:000001">
    <property type="entry name" value="60S ribosomal protein L44"/>
    <property type="match status" value="1"/>
</dbReference>
<dbReference type="Gene3D" id="3.10.450.80">
    <property type="match status" value="1"/>
</dbReference>
<dbReference type="InterPro" id="IPR000552">
    <property type="entry name" value="Ribosomal_eL44"/>
</dbReference>
<dbReference type="InterPro" id="IPR053708">
    <property type="entry name" value="Ribosomal_LSU_eL42"/>
</dbReference>
<dbReference type="InterPro" id="IPR011332">
    <property type="entry name" value="Ribosomal_zn-bd"/>
</dbReference>
<dbReference type="PANTHER" id="PTHR10369">
    <property type="entry name" value="60S RIBOSOMAL PROTEIN L36A/L44"/>
    <property type="match status" value="1"/>
</dbReference>
<dbReference type="Pfam" id="PF00935">
    <property type="entry name" value="Ribosomal_L44"/>
    <property type="match status" value="1"/>
</dbReference>
<dbReference type="SUPFAM" id="SSF57829">
    <property type="entry name" value="Zn-binding ribosomal proteins"/>
    <property type="match status" value="1"/>
</dbReference>
<dbReference type="PROSITE" id="PS01172">
    <property type="entry name" value="RIBOSOMAL_L44E"/>
    <property type="match status" value="1"/>
</dbReference>
<feature type="initiator methionine" description="Removed" evidence="1">
    <location>
        <position position="1"/>
    </location>
</feature>
<feature type="chain" id="PRO_0000149144" description="Large ribosomal subunit protein eL42">
    <location>
        <begin position="2"/>
        <end position="106"/>
    </location>
</feature>
<name>RL44_CYBJA</name>
<comment type="miscellaneous">
    <text>Confers resistance to cycloheximide, an inhibitor of polypeptide elongation.</text>
</comment>
<comment type="similarity">
    <text evidence="2">Belongs to the eukaryotic ribosomal protein eL42 family.</text>
</comment>
<accession>P52809</accession>
<gene>
    <name type="primary">RPL44</name>
</gene>
<sequence>MVNVPKTRRTYCKGKECRKHTQHKVTQYKAGKASLFAQGKRRYDRKQSGYGGQTKPVFHKKAKTTKKVVLRLECVVCKTKAQLALKRCKHFELGGDKKQKGQALQF</sequence>
<proteinExistence type="inferred from homology"/>
<protein>
    <recommendedName>
        <fullName evidence="2">Large ribosomal subunit protein eL42</fullName>
    </recommendedName>
    <alternativeName>
        <fullName>60S ribosomal protein L41</fullName>
    </alternativeName>
    <alternativeName>
        <fullName>60S ribosomal protein L44</fullName>
    </alternativeName>
</protein>
<organism>
    <name type="scientific">Cyberlindnera jadinii</name>
    <name type="common">Torula yeast</name>
    <name type="synonym">Pichia jadinii</name>
    <dbReference type="NCBI Taxonomy" id="4903"/>
    <lineage>
        <taxon>Eukaryota</taxon>
        <taxon>Fungi</taxon>
        <taxon>Dikarya</taxon>
        <taxon>Ascomycota</taxon>
        <taxon>Saccharomycotina</taxon>
        <taxon>Saccharomycetes</taxon>
        <taxon>Phaffomycetales</taxon>
        <taxon>Phaffomycetaceae</taxon>
        <taxon>Cyberlindnera</taxon>
    </lineage>
</organism>
<reference key="1">
    <citation type="journal article" date="1995" name="J. Bacteriol.">
        <title>A transformation system for the yeast Candida utilis: use of a modified endogenous ribosomal protein gene as a drug-resistant marker and ribosomal DNA as an integration target for vector DNA.</title>
        <authorList>
            <person name="Kondo K."/>
            <person name="Saito T."/>
            <person name="Kajiwara S."/>
            <person name="Takagi M."/>
            <person name="Misawa N."/>
        </authorList>
    </citation>
    <scope>NUCLEOTIDE SEQUENCE [GENOMIC DNA]</scope>
    <source>
        <strain>ATCC 9950 / CBS 5609 / DSM 2361 / NBRC 0998 / NRRL Y-900</strain>
    </source>
</reference>